<feature type="chain" id="PRO_0000047697" description="Zinc finger protein 69 homolog B">
    <location>
        <begin position="1"/>
        <end position="534"/>
    </location>
</feature>
<feature type="domain" description="KRAB" evidence="2">
    <location>
        <begin position="74"/>
        <end position="145"/>
    </location>
</feature>
<feature type="zinc finger region" description="C2H2-type 1" evidence="1">
    <location>
        <begin position="279"/>
        <end position="301"/>
    </location>
</feature>
<feature type="zinc finger region" description="C2H2-type 2" evidence="1">
    <location>
        <begin position="307"/>
        <end position="329"/>
    </location>
</feature>
<feature type="zinc finger region" description="C2H2-type 3" evidence="1">
    <location>
        <begin position="335"/>
        <end position="357"/>
    </location>
</feature>
<feature type="zinc finger region" description="C2H2-type 4" evidence="1">
    <location>
        <begin position="363"/>
        <end position="385"/>
    </location>
</feature>
<feature type="zinc finger region" description="C2H2-type 5" evidence="1">
    <location>
        <begin position="391"/>
        <end position="413"/>
    </location>
</feature>
<feature type="zinc finger region" description="C2H2-type 6" evidence="1">
    <location>
        <begin position="419"/>
        <end position="441"/>
    </location>
</feature>
<feature type="zinc finger region" description="C2H2-type 7" evidence="1">
    <location>
        <begin position="447"/>
        <end position="469"/>
    </location>
</feature>
<feature type="zinc finger region" description="C2H2-type 8" evidence="1">
    <location>
        <begin position="475"/>
        <end position="497"/>
    </location>
</feature>
<feature type="zinc finger region" description="C2H2-type 9" evidence="1">
    <location>
        <begin position="503"/>
        <end position="525"/>
    </location>
</feature>
<feature type="cross-link" description="Glycyl lysine isopeptide (Lys-Gly) (interchain with G-Cter in SUMO2)" evidence="6">
    <location>
        <position position="37"/>
    </location>
</feature>
<feature type="cross-link" description="Glycyl lysine isopeptide (Lys-Gly) (interchain with G-Cter in SUMO2)" evidence="6">
    <location>
        <position position="40"/>
    </location>
</feature>
<feature type="cross-link" description="Glycyl lysine isopeptide (Lys-Gly) (interchain with G-Cter in SUMO2)" evidence="6">
    <location>
        <position position="178"/>
    </location>
</feature>
<feature type="cross-link" description="Glycyl lysine isopeptide (Lys-Gly) (interchain with G-Cter in SUMO2)" evidence="6">
    <location>
        <position position="235"/>
    </location>
</feature>
<feature type="splice variant" id="VSP_041647" description="In isoform 2." evidence="4">
    <location>
        <begin position="1"/>
        <end position="102"/>
    </location>
</feature>
<feature type="sequence variant" id="VAR_033584" description="In dbSNP:rs2272994.">
    <original>C</original>
    <variation>Y</variation>
    <location>
        <position position="115"/>
    </location>
</feature>
<feature type="sequence variant" id="VAR_052884" description="In dbSNP:rs12407929.">
    <original>G</original>
    <variation>R</variation>
    <location>
        <position position="359"/>
    </location>
</feature>
<name>ZF69B_HUMAN</name>
<organism>
    <name type="scientific">Homo sapiens</name>
    <name type="common">Human</name>
    <dbReference type="NCBI Taxonomy" id="9606"/>
    <lineage>
        <taxon>Eukaryota</taxon>
        <taxon>Metazoa</taxon>
        <taxon>Chordata</taxon>
        <taxon>Craniata</taxon>
        <taxon>Vertebrata</taxon>
        <taxon>Euteleostomi</taxon>
        <taxon>Mammalia</taxon>
        <taxon>Eutheria</taxon>
        <taxon>Euarchontoglires</taxon>
        <taxon>Primates</taxon>
        <taxon>Haplorrhini</taxon>
        <taxon>Catarrhini</taxon>
        <taxon>Hominidae</taxon>
        <taxon>Homo</taxon>
    </lineage>
</organism>
<proteinExistence type="evidence at protein level"/>
<dbReference type="EMBL" id="AL137241">
    <property type="protein sequence ID" value="CAB70626.1"/>
    <property type="molecule type" value="mRNA"/>
</dbReference>
<dbReference type="EMBL" id="AL031985">
    <property type="status" value="NOT_ANNOTATED_CDS"/>
    <property type="molecule type" value="Genomic_DNA"/>
</dbReference>
<dbReference type="EMBL" id="CN256362">
    <property type="status" value="NOT_ANNOTATED_CDS"/>
    <property type="molecule type" value="mRNA"/>
</dbReference>
<dbReference type="EMBL" id="BC017498">
    <property type="protein sequence ID" value="AAH17498.1"/>
    <property type="status" value="ALT_INIT"/>
    <property type="molecule type" value="mRNA"/>
</dbReference>
<dbReference type="CCDS" id="CCDS452.2">
    <molecule id="Q9UJL9-1"/>
</dbReference>
<dbReference type="RefSeq" id="NP_001356494.1">
    <molecule id="Q9UJL9-1"/>
    <property type="nucleotide sequence ID" value="NM_001369565.1"/>
</dbReference>
<dbReference type="RefSeq" id="NP_075558.2">
    <molecule id="Q9UJL9-1"/>
    <property type="nucleotide sequence ID" value="NM_023070.3"/>
</dbReference>
<dbReference type="RefSeq" id="XP_005271194.1">
    <property type="nucleotide sequence ID" value="XM_005271137.2"/>
</dbReference>
<dbReference type="RefSeq" id="XP_005271196.1">
    <property type="nucleotide sequence ID" value="XM_005271139.3"/>
</dbReference>
<dbReference type="SMR" id="Q9UJL9"/>
<dbReference type="BioGRID" id="122409">
    <property type="interactions" value="13"/>
</dbReference>
<dbReference type="FunCoup" id="Q9UJL9">
    <property type="interactions" value="158"/>
</dbReference>
<dbReference type="IntAct" id="Q9UJL9">
    <property type="interactions" value="11"/>
</dbReference>
<dbReference type="STRING" id="9606.ENSP00000354547"/>
<dbReference type="iPTMnet" id="Q9UJL9"/>
<dbReference type="PhosphoSitePlus" id="Q9UJL9"/>
<dbReference type="BioMuta" id="ZFP69B"/>
<dbReference type="DMDM" id="342187319"/>
<dbReference type="jPOST" id="Q9UJL9"/>
<dbReference type="MassIVE" id="Q9UJL9"/>
<dbReference type="PaxDb" id="9606-ENSP00000399664"/>
<dbReference type="PeptideAtlas" id="Q9UJL9"/>
<dbReference type="Antibodypedia" id="32086">
    <property type="antibodies" value="95 antibodies from 14 providers"/>
</dbReference>
<dbReference type="DNASU" id="65243"/>
<dbReference type="Ensembl" id="ENST00000361584.5">
    <molecule id="Q9UJL9-1"/>
    <property type="protein sequence ID" value="ENSP00000354547.4"/>
    <property type="gene ID" value="ENSG00000187801.15"/>
</dbReference>
<dbReference type="Ensembl" id="ENST00000411995.6">
    <molecule id="Q9UJL9-1"/>
    <property type="protein sequence ID" value="ENSP00000399664.2"/>
    <property type="gene ID" value="ENSG00000187801.15"/>
</dbReference>
<dbReference type="GeneID" id="65243"/>
<dbReference type="KEGG" id="hsa:65243"/>
<dbReference type="MANE-Select" id="ENST00000361584.5">
    <property type="protein sequence ID" value="ENSP00000354547.4"/>
    <property type="RefSeq nucleotide sequence ID" value="NM_023070.3"/>
    <property type="RefSeq protein sequence ID" value="NP_075558.2"/>
</dbReference>
<dbReference type="UCSC" id="uc001cfn.3">
    <molecule id="Q9UJL9-1"/>
    <property type="organism name" value="human"/>
</dbReference>
<dbReference type="AGR" id="HGNC:28053"/>
<dbReference type="CTD" id="65243"/>
<dbReference type="DisGeNET" id="65243"/>
<dbReference type="GeneCards" id="ZFP69B"/>
<dbReference type="HGNC" id="HGNC:28053">
    <property type="gene designation" value="ZFP69B"/>
</dbReference>
<dbReference type="HPA" id="ENSG00000187801">
    <property type="expression patterns" value="Low tissue specificity"/>
</dbReference>
<dbReference type="neXtProt" id="NX_Q9UJL9"/>
<dbReference type="OpenTargets" id="ENSG00000187801"/>
<dbReference type="VEuPathDB" id="HostDB:ENSG00000187801"/>
<dbReference type="eggNOG" id="KOG1721">
    <property type="taxonomic scope" value="Eukaryota"/>
</dbReference>
<dbReference type="GeneTree" id="ENSGT00940000163434"/>
<dbReference type="HOGENOM" id="CLU_002678_57_1_1"/>
<dbReference type="InParanoid" id="Q9UJL9"/>
<dbReference type="OMA" id="HQENQGM"/>
<dbReference type="OrthoDB" id="9439903at2759"/>
<dbReference type="PAN-GO" id="Q9UJL9">
    <property type="GO annotations" value="3 GO annotations based on evolutionary models"/>
</dbReference>
<dbReference type="PhylomeDB" id="Q9UJL9"/>
<dbReference type="TreeFam" id="TF337055"/>
<dbReference type="PathwayCommons" id="Q9UJL9"/>
<dbReference type="Reactome" id="R-HSA-212436">
    <property type="pathway name" value="Generic Transcription Pathway"/>
</dbReference>
<dbReference type="SignaLink" id="Q9UJL9"/>
<dbReference type="BioGRID-ORCS" id="65243">
    <property type="hits" value="293 hits in 1174 CRISPR screens"/>
</dbReference>
<dbReference type="GenomeRNAi" id="65243"/>
<dbReference type="Pharos" id="Q9UJL9">
    <property type="development level" value="Tbio"/>
</dbReference>
<dbReference type="PRO" id="PR:Q9UJL9"/>
<dbReference type="Proteomes" id="UP000005640">
    <property type="component" value="Chromosome 1"/>
</dbReference>
<dbReference type="RNAct" id="Q9UJL9">
    <property type="molecule type" value="protein"/>
</dbReference>
<dbReference type="Bgee" id="ENSG00000187801">
    <property type="expression patterns" value="Expressed in primordial germ cell in gonad and 105 other cell types or tissues"/>
</dbReference>
<dbReference type="ExpressionAtlas" id="Q9UJL9">
    <property type="expression patterns" value="baseline and differential"/>
</dbReference>
<dbReference type="GO" id="GO:0005730">
    <property type="term" value="C:nucleolus"/>
    <property type="evidence" value="ECO:0000314"/>
    <property type="project" value="UniProtKB"/>
</dbReference>
<dbReference type="GO" id="GO:0005634">
    <property type="term" value="C:nucleus"/>
    <property type="evidence" value="ECO:0000314"/>
    <property type="project" value="UniProtKB"/>
</dbReference>
<dbReference type="GO" id="GO:0000981">
    <property type="term" value="F:DNA-binding transcription factor activity, RNA polymerase II-specific"/>
    <property type="evidence" value="ECO:0000318"/>
    <property type="project" value="GO_Central"/>
</dbReference>
<dbReference type="GO" id="GO:0000977">
    <property type="term" value="F:RNA polymerase II transcription regulatory region sequence-specific DNA binding"/>
    <property type="evidence" value="ECO:0000318"/>
    <property type="project" value="GO_Central"/>
</dbReference>
<dbReference type="GO" id="GO:0008270">
    <property type="term" value="F:zinc ion binding"/>
    <property type="evidence" value="ECO:0007669"/>
    <property type="project" value="UniProtKB-KW"/>
</dbReference>
<dbReference type="GO" id="GO:0007030">
    <property type="term" value="P:Golgi organization"/>
    <property type="evidence" value="ECO:0000315"/>
    <property type="project" value="UniProtKB"/>
</dbReference>
<dbReference type="GO" id="GO:0006357">
    <property type="term" value="P:regulation of transcription by RNA polymerase II"/>
    <property type="evidence" value="ECO:0000318"/>
    <property type="project" value="GO_Central"/>
</dbReference>
<dbReference type="CDD" id="cd07765">
    <property type="entry name" value="KRAB_A-box"/>
    <property type="match status" value="1"/>
</dbReference>
<dbReference type="FunFam" id="3.30.160.60:FF:000045">
    <property type="entry name" value="ZFP69 zinc finger protein B"/>
    <property type="match status" value="1"/>
</dbReference>
<dbReference type="FunFam" id="3.30.160.60:FF:001479">
    <property type="entry name" value="ZFP69 zinc finger protein B"/>
    <property type="match status" value="1"/>
</dbReference>
<dbReference type="FunFam" id="3.30.160.60:FF:001599">
    <property type="entry name" value="ZFP69 zinc finger protein B"/>
    <property type="match status" value="1"/>
</dbReference>
<dbReference type="FunFam" id="3.30.160.60:FF:003084">
    <property type="entry name" value="Zinc finger protein 1009"/>
    <property type="match status" value="1"/>
</dbReference>
<dbReference type="FunFam" id="3.30.160.60:FF:001498">
    <property type="entry name" value="Zinc finger protein 404"/>
    <property type="match status" value="1"/>
</dbReference>
<dbReference type="FunFam" id="3.30.160.60:FF:002090">
    <property type="entry name" value="Zinc finger protein 473"/>
    <property type="match status" value="1"/>
</dbReference>
<dbReference type="FunFam" id="3.30.160.60:FF:002254">
    <property type="entry name" value="Zinc finger protein 540"/>
    <property type="match status" value="1"/>
</dbReference>
<dbReference type="FunFam" id="3.30.160.60:FF:000176">
    <property type="entry name" value="zinc finger protein 70"/>
    <property type="match status" value="1"/>
</dbReference>
<dbReference type="FunFam" id="3.30.160.60:FF:000307">
    <property type="entry name" value="Zinc finger protein ZFP69 isoform 1"/>
    <property type="match status" value="1"/>
</dbReference>
<dbReference type="Gene3D" id="6.10.140.140">
    <property type="match status" value="1"/>
</dbReference>
<dbReference type="Gene3D" id="3.30.160.60">
    <property type="entry name" value="Classic Zinc Finger"/>
    <property type="match status" value="9"/>
</dbReference>
<dbReference type="InterPro" id="IPR001909">
    <property type="entry name" value="KRAB"/>
</dbReference>
<dbReference type="InterPro" id="IPR036051">
    <property type="entry name" value="KRAB_dom_sf"/>
</dbReference>
<dbReference type="InterPro" id="IPR003309">
    <property type="entry name" value="SCAN_dom"/>
</dbReference>
<dbReference type="InterPro" id="IPR036236">
    <property type="entry name" value="Znf_C2H2_sf"/>
</dbReference>
<dbReference type="InterPro" id="IPR013087">
    <property type="entry name" value="Znf_C2H2_type"/>
</dbReference>
<dbReference type="PANTHER" id="PTHR24381">
    <property type="entry name" value="ZINC FINGER PROTEIN"/>
    <property type="match status" value="1"/>
</dbReference>
<dbReference type="PANTHER" id="PTHR24381:SF462">
    <property type="entry name" value="ZINC FINGER PROTEIN 566"/>
    <property type="match status" value="1"/>
</dbReference>
<dbReference type="Pfam" id="PF01352">
    <property type="entry name" value="KRAB"/>
    <property type="match status" value="1"/>
</dbReference>
<dbReference type="Pfam" id="PF00096">
    <property type="entry name" value="zf-C2H2"/>
    <property type="match status" value="6"/>
</dbReference>
<dbReference type="Pfam" id="PF13465">
    <property type="entry name" value="zf-H2C2_2"/>
    <property type="match status" value="1"/>
</dbReference>
<dbReference type="SMART" id="SM00349">
    <property type="entry name" value="KRAB"/>
    <property type="match status" value="1"/>
</dbReference>
<dbReference type="SMART" id="SM00355">
    <property type="entry name" value="ZnF_C2H2"/>
    <property type="match status" value="9"/>
</dbReference>
<dbReference type="SUPFAM" id="SSF57667">
    <property type="entry name" value="beta-beta-alpha zinc fingers"/>
    <property type="match status" value="5"/>
</dbReference>
<dbReference type="SUPFAM" id="SSF109640">
    <property type="entry name" value="KRAB domain (Kruppel-associated box)"/>
    <property type="match status" value="1"/>
</dbReference>
<dbReference type="PROSITE" id="PS50805">
    <property type="entry name" value="KRAB"/>
    <property type="match status" value="1"/>
</dbReference>
<dbReference type="PROSITE" id="PS00028">
    <property type="entry name" value="ZINC_FINGER_C2H2_1"/>
    <property type="match status" value="9"/>
</dbReference>
<dbReference type="PROSITE" id="PS50157">
    <property type="entry name" value="ZINC_FINGER_C2H2_2"/>
    <property type="match status" value="9"/>
</dbReference>
<comment type="function">
    <text evidence="3">May be involved in transcriptional regulation. Essential for Golgi structural integrity (PubMed:29851555).</text>
</comment>
<comment type="interaction">
    <interactant intactId="EBI-10322364">
        <id>Q9UJL9</id>
    </interactant>
    <interactant intactId="EBI-10171697">
        <id>Q6A162</id>
        <label>KRT40</label>
    </interactant>
    <organismsDiffer>false</organismsDiffer>
    <experiments>3</experiments>
</comment>
<comment type="interaction">
    <interactant intactId="EBI-10322364">
        <id>Q9UJL9</id>
    </interactant>
    <interactant intactId="EBI-1567797">
        <id>Q8WWY3</id>
        <label>PRPF31</label>
    </interactant>
    <organismsDiffer>false</organismsDiffer>
    <experiments>3</experiments>
</comment>
<comment type="subcellular location">
    <subcellularLocation>
        <location evidence="3">Nucleus</location>
    </subcellularLocation>
</comment>
<comment type="alternative products">
    <event type="alternative splicing"/>
    <isoform>
        <id>Q9UJL9-1</id>
        <name>1</name>
        <sequence type="displayed"/>
    </isoform>
    <isoform>
        <id>Q9UJL9-2</id>
        <name>2</name>
        <sequence type="described" ref="VSP_041647"/>
    </isoform>
</comment>
<comment type="induction">
    <text evidence="3">Up-regulated by Golgi stress-inducing agent nigericin.</text>
</comment>
<comment type="similarity">
    <text evidence="5">Belongs to the krueppel C2H2-type zinc-finger protein family.</text>
</comment>
<comment type="sequence caution" evidence="5">
    <conflict type="erroneous initiation">
        <sequence resource="EMBL-CDS" id="AAH17498"/>
    </conflict>
    <text>Truncated N-terminus.</text>
</comment>
<accession>Q9UJL9</accession>
<accession>Q5QPL4</accession>
<protein>
    <recommendedName>
        <fullName>Zinc finger protein 69 homolog B</fullName>
    </recommendedName>
    <alternativeName>
        <fullName>Zinc finger protein 643</fullName>
    </alternativeName>
</protein>
<evidence type="ECO:0000255" key="1">
    <source>
        <dbReference type="PROSITE-ProRule" id="PRU00042"/>
    </source>
</evidence>
<evidence type="ECO:0000255" key="2">
    <source>
        <dbReference type="PROSITE-ProRule" id="PRU00119"/>
    </source>
</evidence>
<evidence type="ECO:0000269" key="3">
    <source>
    </source>
</evidence>
<evidence type="ECO:0000303" key="4">
    <source ref="1"/>
</evidence>
<evidence type="ECO:0000305" key="5"/>
<evidence type="ECO:0007744" key="6">
    <source>
    </source>
</evidence>
<sequence>MLQQLLITLPTEASTWVKLRHPKAATERVALWEDVTKMFKAEALLSQDADETQGESLESRVTLGSLTAESQELLTFKDVSVDFTQEEWGQLAPAHRNLYREVMLENYGNLVSVGCQLSKPGVISQLEKGEEPWLMERDISGVPSSDLKSKTKTKESALQNDISWEELHCGLMMERFTKGSSMYSTLGRISKCNKLESQQENQRMGKGQIPLMCKKTFTQERGQESNRFEKRINVKSEVMPGPIGLPRKRDRKYDTPGKRSRYNIDLVNHSRSYTKMKTFECNICEKIFKQLIHLTEHMRIHTGEKPFRCKECGKAFSQSSSLIPHQRIHTGEKPYECKECGKTFRHPSSLTQHVRIHTGEKPYECRVCEKAFSQSIGLIQHLRTHVREKPFTCKDCGKAFFQIRHLRQHEIIHTGVKPYICNVCSKTFSHSTYLTQHQRTHTGERPYKCKECGKAFSQRIHLSIHQRVHTGVKPYECSHCGKAFRHDSSFAKHQRIHTGEKPYDCNECGKAFSCSSSLIRHCKTHLRNTFSNVV</sequence>
<gene>
    <name type="primary">ZFP69B</name>
    <name type="synonym">ZNF643</name>
</gene>
<keyword id="KW-0025">Alternative splicing</keyword>
<keyword id="KW-0238">DNA-binding</keyword>
<keyword id="KW-1017">Isopeptide bond</keyword>
<keyword id="KW-0479">Metal-binding</keyword>
<keyword id="KW-0539">Nucleus</keyword>
<keyword id="KW-1267">Proteomics identification</keyword>
<keyword id="KW-1185">Reference proteome</keyword>
<keyword id="KW-0677">Repeat</keyword>
<keyword id="KW-0804">Transcription</keyword>
<keyword id="KW-0805">Transcription regulation</keyword>
<keyword id="KW-0832">Ubl conjugation</keyword>
<keyword id="KW-0862">Zinc</keyword>
<keyword id="KW-0863">Zinc-finger</keyword>
<reference key="1">
    <citation type="submission" date="2000-01" db="EMBL/GenBank/DDBJ databases">
        <authorList>
            <person name="Rhodes S."/>
            <person name="Huckle E."/>
        </authorList>
    </citation>
    <scope>NUCLEOTIDE SEQUENCE [LARGE SCALE MRNA] (ISOFORM 2)</scope>
</reference>
<reference key="2">
    <citation type="journal article" date="2006" name="Nature">
        <title>The DNA sequence and biological annotation of human chromosome 1.</title>
        <authorList>
            <person name="Gregory S.G."/>
            <person name="Barlow K.F."/>
            <person name="McLay K.E."/>
            <person name="Kaul R."/>
            <person name="Swarbreck D."/>
            <person name="Dunham A."/>
            <person name="Scott C.E."/>
            <person name="Howe K.L."/>
            <person name="Woodfine K."/>
            <person name="Spencer C.C.A."/>
            <person name="Jones M.C."/>
            <person name="Gillson C."/>
            <person name="Searle S."/>
            <person name="Zhou Y."/>
            <person name="Kokocinski F."/>
            <person name="McDonald L."/>
            <person name="Evans R."/>
            <person name="Phillips K."/>
            <person name="Atkinson A."/>
            <person name="Cooper R."/>
            <person name="Jones C."/>
            <person name="Hall R.E."/>
            <person name="Andrews T.D."/>
            <person name="Lloyd C."/>
            <person name="Ainscough R."/>
            <person name="Almeida J.P."/>
            <person name="Ambrose K.D."/>
            <person name="Anderson F."/>
            <person name="Andrew R.W."/>
            <person name="Ashwell R.I.S."/>
            <person name="Aubin K."/>
            <person name="Babbage A.K."/>
            <person name="Bagguley C.L."/>
            <person name="Bailey J."/>
            <person name="Beasley H."/>
            <person name="Bethel G."/>
            <person name="Bird C.P."/>
            <person name="Bray-Allen S."/>
            <person name="Brown J.Y."/>
            <person name="Brown A.J."/>
            <person name="Buckley D."/>
            <person name="Burton J."/>
            <person name="Bye J."/>
            <person name="Carder C."/>
            <person name="Chapman J.C."/>
            <person name="Clark S.Y."/>
            <person name="Clarke G."/>
            <person name="Clee C."/>
            <person name="Cobley V."/>
            <person name="Collier R.E."/>
            <person name="Corby N."/>
            <person name="Coville G.J."/>
            <person name="Davies J."/>
            <person name="Deadman R."/>
            <person name="Dunn M."/>
            <person name="Earthrowl M."/>
            <person name="Ellington A.G."/>
            <person name="Errington H."/>
            <person name="Frankish A."/>
            <person name="Frankland J."/>
            <person name="French L."/>
            <person name="Garner P."/>
            <person name="Garnett J."/>
            <person name="Gay L."/>
            <person name="Ghori M.R.J."/>
            <person name="Gibson R."/>
            <person name="Gilby L.M."/>
            <person name="Gillett W."/>
            <person name="Glithero R.J."/>
            <person name="Grafham D.V."/>
            <person name="Griffiths C."/>
            <person name="Griffiths-Jones S."/>
            <person name="Grocock R."/>
            <person name="Hammond S."/>
            <person name="Harrison E.S.I."/>
            <person name="Hart E."/>
            <person name="Haugen E."/>
            <person name="Heath P.D."/>
            <person name="Holmes S."/>
            <person name="Holt K."/>
            <person name="Howden P.J."/>
            <person name="Hunt A.R."/>
            <person name="Hunt S.E."/>
            <person name="Hunter G."/>
            <person name="Isherwood J."/>
            <person name="James R."/>
            <person name="Johnson C."/>
            <person name="Johnson D."/>
            <person name="Joy A."/>
            <person name="Kay M."/>
            <person name="Kershaw J.K."/>
            <person name="Kibukawa M."/>
            <person name="Kimberley A.M."/>
            <person name="King A."/>
            <person name="Knights A.J."/>
            <person name="Lad H."/>
            <person name="Laird G."/>
            <person name="Lawlor S."/>
            <person name="Leongamornlert D.A."/>
            <person name="Lloyd D.M."/>
            <person name="Loveland J."/>
            <person name="Lovell J."/>
            <person name="Lush M.J."/>
            <person name="Lyne R."/>
            <person name="Martin S."/>
            <person name="Mashreghi-Mohammadi M."/>
            <person name="Matthews L."/>
            <person name="Matthews N.S.W."/>
            <person name="McLaren S."/>
            <person name="Milne S."/>
            <person name="Mistry S."/>
            <person name="Moore M.J.F."/>
            <person name="Nickerson T."/>
            <person name="O'Dell C.N."/>
            <person name="Oliver K."/>
            <person name="Palmeiri A."/>
            <person name="Palmer S.A."/>
            <person name="Parker A."/>
            <person name="Patel D."/>
            <person name="Pearce A.V."/>
            <person name="Peck A.I."/>
            <person name="Pelan S."/>
            <person name="Phelps K."/>
            <person name="Phillimore B.J."/>
            <person name="Plumb R."/>
            <person name="Rajan J."/>
            <person name="Raymond C."/>
            <person name="Rouse G."/>
            <person name="Saenphimmachak C."/>
            <person name="Sehra H.K."/>
            <person name="Sheridan E."/>
            <person name="Shownkeen R."/>
            <person name="Sims S."/>
            <person name="Skuce C.D."/>
            <person name="Smith M."/>
            <person name="Steward C."/>
            <person name="Subramanian S."/>
            <person name="Sycamore N."/>
            <person name="Tracey A."/>
            <person name="Tromans A."/>
            <person name="Van Helmond Z."/>
            <person name="Wall M."/>
            <person name="Wallis J.M."/>
            <person name="White S."/>
            <person name="Whitehead S.L."/>
            <person name="Wilkinson J.E."/>
            <person name="Willey D.L."/>
            <person name="Williams H."/>
            <person name="Wilming L."/>
            <person name="Wray P.W."/>
            <person name="Wu Z."/>
            <person name="Coulson A."/>
            <person name="Vaudin M."/>
            <person name="Sulston J.E."/>
            <person name="Durbin R.M."/>
            <person name="Hubbard T."/>
            <person name="Wooster R."/>
            <person name="Dunham I."/>
            <person name="Carter N.P."/>
            <person name="McVean G."/>
            <person name="Ross M.T."/>
            <person name="Harrow J."/>
            <person name="Olson M.V."/>
            <person name="Beck S."/>
            <person name="Rogers J."/>
            <person name="Bentley D.R."/>
        </authorList>
    </citation>
    <scope>NUCLEOTIDE SEQUENCE [LARGE SCALE GENOMIC DNA]</scope>
</reference>
<reference key="3">
    <citation type="journal article" date="2004" name="Nat. Biotechnol.">
        <title>Transcriptome characterization elucidates signaling networks that control human ES cell growth and differentiation.</title>
        <authorList>
            <person name="Brandenberger R."/>
            <person name="Wei H."/>
            <person name="Zhang S."/>
            <person name="Lei S."/>
            <person name="Murage J."/>
            <person name="Fisk G.J."/>
            <person name="Li Y."/>
            <person name="Xu C."/>
            <person name="Fang R."/>
            <person name="Guegler K."/>
            <person name="Rao M.S."/>
            <person name="Mandalam R."/>
            <person name="Lebkowski J."/>
            <person name="Stanton L.W."/>
        </authorList>
    </citation>
    <scope>NUCLEOTIDE SEQUENCE [MRNA] OF 1-86 (ISOFORM 1)</scope>
</reference>
<reference key="4">
    <citation type="journal article" date="2004" name="Genome Res.">
        <title>The status, quality, and expansion of the NIH full-length cDNA project: the Mammalian Gene Collection (MGC).</title>
        <authorList>
            <consortium name="The MGC Project Team"/>
        </authorList>
    </citation>
    <scope>NUCLEOTIDE SEQUENCE [LARGE SCALE MRNA] OF 29-534 (ISOFORM 1)</scope>
    <source>
        <tissue>B-cell</tissue>
    </source>
</reference>
<reference key="5">
    <citation type="journal article" date="2017" name="Nat. Struct. Mol. Biol.">
        <title>Site-specific mapping of the human SUMO proteome reveals co-modification with phosphorylation.</title>
        <authorList>
            <person name="Hendriks I.A."/>
            <person name="Lyon D."/>
            <person name="Young C."/>
            <person name="Jensen L.J."/>
            <person name="Vertegaal A.C."/>
            <person name="Nielsen M.L."/>
        </authorList>
    </citation>
    <scope>SUMOYLATION [LARGE SCALE ANALYSIS] AT LYS-37; LYS-40; LYS-178 AND LYS-235</scope>
    <scope>IDENTIFICATION BY MASS SPECTROMETRY [LARGE SCALE ANALYSIS]</scope>
</reference>
<reference key="6">
    <citation type="journal article" date="2018" name="Mol. Biol. Cell">
        <title>Targeted protein unfolding uncovers a Golgi-specific transcriptional stress response.</title>
        <authorList>
            <person name="Serebrenik Y.V."/>
            <person name="Hellerschmied D."/>
            <person name="Toure M."/>
            <person name="Lopez-Giraldez F."/>
            <person name="Brookner D."/>
            <person name="Crews C.M."/>
        </authorList>
    </citation>
    <scope>FUNCTION</scope>
    <scope>SUBCELLULAR LOCATION</scope>
</reference>